<sequence length="715" mass="79126">MLVPIFTLKLNHKINPRMVAIGKYDGIHPCLTAATQAGKVFIHNPHTRAQRPTAHRLSQSTQDSDISLLNINQSVSCLTAGTLGPKSTGDTLLVGSQTNLLAYDVHDNTDVFYKEVTDGANAIVLGKLGDIQSPLAIIGGNCALQGFDYEGNDLFWTVTGDNVRSLVLCDFTADGKNELLVGSEDFDIRVFKEDELVTEMAENETVTSLCHMHGSRFGYALANGTVGVYDRTARYWRIKSKNHAMSIHAFDLNADGVVELITGWSNGKIDARSDRTGEVIFKDNFSSSVAGVVEGDYRMDGQIQLICTSVEGEVRGYLPASKEMKGNLMDSSIEQDLIRELSQRKQNLMLELRNYEENAKALPGLSEGESKMGVIPANTQLQTALSVRRASESQKAHIELNISTPNETIIRAVLIFAEGIFEGESHVVHPSAQNLSGCVRVPIIPPKDIPVDLHIKAFVGGKTSTQFHVFEITRQLPRFSMYDLNVDPSAPEPTGKVTFCINDRPQRVVMWLNQNFLLPEGIDSPDVTFSALRGGGLLRISLQTSGEITLRTDDIDLAGDLVQSLASFLAIEDLQAESDFPVYFKELRATLTEVDEFHSVHQKLTAAMADHSNYIRNMLVQAEDARLMGDWRNMKKRYIELYDLNRDLVNEYKIRSNNHNALLARLKSVNQAIQRAGRLRVGKPKSQVITACRDAIKNNNINALFKIMRAGTTSS</sequence>
<dbReference type="EMBL" id="AF342739">
    <property type="protein sequence ID" value="AAK28555.1"/>
    <property type="molecule type" value="mRNA"/>
</dbReference>
<dbReference type="RefSeq" id="NP_690843.1">
    <property type="nucleotide sequence ID" value="NM_152887.1"/>
</dbReference>
<dbReference type="SMR" id="Q98SP7"/>
<dbReference type="BioGRID" id="79798">
    <property type="interactions" value="1"/>
</dbReference>
<dbReference type="FunCoup" id="Q98SP7">
    <property type="interactions" value="639"/>
</dbReference>
<dbReference type="STRING" id="7955.ENSDARP00000060999"/>
<dbReference type="PaxDb" id="7955-ENSDARP00000060999"/>
<dbReference type="Ensembl" id="ENSDART00000061000">
    <property type="protein sequence ID" value="ENSDARP00000060999"/>
    <property type="gene ID" value="ENSDARG00000041621"/>
</dbReference>
<dbReference type="Ensembl" id="ENSDART00000182692">
    <property type="protein sequence ID" value="ENSDARP00000145245"/>
    <property type="gene ID" value="ENSDARG00000110124"/>
</dbReference>
<dbReference type="Ensembl" id="ENSDART00000191308">
    <property type="protein sequence ID" value="ENSDARP00000152776"/>
    <property type="gene ID" value="ENSDARG00000041621"/>
</dbReference>
<dbReference type="GeneID" id="259187"/>
<dbReference type="KEGG" id="dre:259187"/>
<dbReference type="AGR" id="ZFIN:ZDB-GENE-020801-1"/>
<dbReference type="CTD" id="583"/>
<dbReference type="ZFIN" id="ZDB-GENE-020801-1">
    <property type="gene designation" value="bbs2"/>
</dbReference>
<dbReference type="eggNOG" id="ENOG502QPWU">
    <property type="taxonomic scope" value="Eukaryota"/>
</dbReference>
<dbReference type="HOGENOM" id="CLU_023359_0_0_1"/>
<dbReference type="InParanoid" id="Q98SP7"/>
<dbReference type="OMA" id="MSDGANC"/>
<dbReference type="OrthoDB" id="2120021at2759"/>
<dbReference type="PhylomeDB" id="Q98SP7"/>
<dbReference type="TreeFam" id="TF313236"/>
<dbReference type="PRO" id="PR:Q98SP7"/>
<dbReference type="Proteomes" id="UP000000437">
    <property type="component" value="Alternate scaffold 18"/>
</dbReference>
<dbReference type="Proteomes" id="UP000000437">
    <property type="component" value="Chromosome 18"/>
</dbReference>
<dbReference type="Bgee" id="ENSDARG00000041621">
    <property type="expression patterns" value="Expressed in testis and 21 other cell types or tissues"/>
</dbReference>
<dbReference type="GO" id="GO:0034464">
    <property type="term" value="C:BBSome"/>
    <property type="evidence" value="ECO:0000318"/>
    <property type="project" value="GO_Central"/>
</dbReference>
<dbReference type="GO" id="GO:0034451">
    <property type="term" value="C:centriolar satellite"/>
    <property type="evidence" value="ECO:0007669"/>
    <property type="project" value="UniProtKB-SubCell"/>
</dbReference>
<dbReference type="GO" id="GO:0036064">
    <property type="term" value="C:ciliary basal body"/>
    <property type="evidence" value="ECO:0000318"/>
    <property type="project" value="GO_Central"/>
</dbReference>
<dbReference type="GO" id="GO:0060170">
    <property type="term" value="C:ciliary membrane"/>
    <property type="evidence" value="ECO:0007669"/>
    <property type="project" value="UniProtKB-SubCell"/>
</dbReference>
<dbReference type="GO" id="GO:0005737">
    <property type="term" value="C:cytoplasm"/>
    <property type="evidence" value="ECO:0007669"/>
    <property type="project" value="UniProtKB-SubCell"/>
</dbReference>
<dbReference type="GO" id="GO:0016020">
    <property type="term" value="C:membrane"/>
    <property type="evidence" value="ECO:0000318"/>
    <property type="project" value="GO_Central"/>
</dbReference>
<dbReference type="GO" id="GO:0031514">
    <property type="term" value="C:motile cilium"/>
    <property type="evidence" value="ECO:0000318"/>
    <property type="project" value="GO_Central"/>
</dbReference>
<dbReference type="GO" id="GO:0043005">
    <property type="term" value="C:neuron projection"/>
    <property type="evidence" value="ECO:0000318"/>
    <property type="project" value="GO_Central"/>
</dbReference>
<dbReference type="GO" id="GO:0060271">
    <property type="term" value="P:cilium assembly"/>
    <property type="evidence" value="ECO:0000315"/>
    <property type="project" value="BHF-UCL"/>
</dbReference>
<dbReference type="GO" id="GO:0007368">
    <property type="term" value="P:determination of left/right symmetry"/>
    <property type="evidence" value="ECO:0000316"/>
    <property type="project" value="ZFIN"/>
</dbReference>
<dbReference type="GO" id="GO:0007369">
    <property type="term" value="P:gastrulation"/>
    <property type="evidence" value="ECO:0000315"/>
    <property type="project" value="ZFIN"/>
</dbReference>
<dbReference type="GO" id="GO:0046907">
    <property type="term" value="P:intracellular transport"/>
    <property type="evidence" value="ECO:0000315"/>
    <property type="project" value="ZFIN"/>
</dbReference>
<dbReference type="GO" id="GO:0070121">
    <property type="term" value="P:Kupffer's vesicle development"/>
    <property type="evidence" value="ECO:0000315"/>
    <property type="project" value="ZFIN"/>
</dbReference>
<dbReference type="GO" id="GO:0032402">
    <property type="term" value="P:melanosome transport"/>
    <property type="evidence" value="ECO:0000315"/>
    <property type="project" value="BHF-UCL"/>
</dbReference>
<dbReference type="GO" id="GO:1905515">
    <property type="term" value="P:non-motile cilium assembly"/>
    <property type="evidence" value="ECO:0007669"/>
    <property type="project" value="InterPro"/>
</dbReference>
<dbReference type="GO" id="GO:0045494">
    <property type="term" value="P:photoreceptor cell maintenance"/>
    <property type="evidence" value="ECO:0000315"/>
    <property type="project" value="ZFIN"/>
</dbReference>
<dbReference type="GO" id="GO:0051877">
    <property type="term" value="P:pigment granule aggregation in cell center"/>
    <property type="evidence" value="ECO:0000315"/>
    <property type="project" value="ZFIN"/>
</dbReference>
<dbReference type="GO" id="GO:0042478">
    <property type="term" value="P:regulation of eye photoreceptor cell development"/>
    <property type="evidence" value="ECO:0000315"/>
    <property type="project" value="ZFIN"/>
</dbReference>
<dbReference type="FunFam" id="2.130.10.10:FF:000967">
    <property type="entry name" value="Bardet-Biedl syndrome 2 protein homolog"/>
    <property type="match status" value="1"/>
</dbReference>
<dbReference type="Gene3D" id="2.130.10.10">
    <property type="entry name" value="YVTN repeat-like/Quinoprotein amine dehydrogenase"/>
    <property type="match status" value="1"/>
</dbReference>
<dbReference type="InterPro" id="IPR016616">
    <property type="entry name" value="Bardet-Biedl_syndrome_2_prot"/>
</dbReference>
<dbReference type="InterPro" id="IPR055381">
    <property type="entry name" value="BBS2_CtH_dom"/>
</dbReference>
<dbReference type="InterPro" id="IPR029333">
    <property type="entry name" value="BBS2_GAE_dom"/>
</dbReference>
<dbReference type="InterPro" id="IPR055380">
    <property type="entry name" value="BBS2_hp_dom"/>
</dbReference>
<dbReference type="InterPro" id="IPR029429">
    <property type="entry name" value="BBS2_Mid"/>
</dbReference>
<dbReference type="InterPro" id="IPR029430">
    <property type="entry name" value="BBS2_N"/>
</dbReference>
<dbReference type="InterPro" id="IPR055379">
    <property type="entry name" value="BBS2_pf_dom"/>
</dbReference>
<dbReference type="InterPro" id="IPR015943">
    <property type="entry name" value="WD40/YVTN_repeat-like_dom_sf"/>
</dbReference>
<dbReference type="InterPro" id="IPR036322">
    <property type="entry name" value="WD40_repeat_dom_sf"/>
</dbReference>
<dbReference type="PANTHER" id="PTHR32465">
    <property type="entry name" value="BARDET-BIEDL SYNDROME 2 PROTEIN"/>
    <property type="match status" value="1"/>
</dbReference>
<dbReference type="PANTHER" id="PTHR32465:SF0">
    <property type="entry name" value="BARDET-BIEDL SYNDROME 2 PROTEIN"/>
    <property type="match status" value="1"/>
</dbReference>
<dbReference type="Pfam" id="PF23351">
    <property type="entry name" value="BBS2_CtH"/>
    <property type="match status" value="1"/>
</dbReference>
<dbReference type="Pfam" id="PF14782">
    <property type="entry name" value="BBS2_GAE"/>
    <property type="match status" value="1"/>
</dbReference>
<dbReference type="Pfam" id="PF23353">
    <property type="entry name" value="BBS2_hp"/>
    <property type="match status" value="1"/>
</dbReference>
<dbReference type="Pfam" id="PF14783">
    <property type="entry name" value="BBS2_Mid"/>
    <property type="match status" value="1"/>
</dbReference>
<dbReference type="Pfam" id="PF14781">
    <property type="entry name" value="BBS2_N"/>
    <property type="match status" value="1"/>
</dbReference>
<dbReference type="Pfam" id="PF23350">
    <property type="entry name" value="BBS2_pf"/>
    <property type="match status" value="1"/>
</dbReference>
<dbReference type="PIRSF" id="PIRSF013684">
    <property type="entry name" value="BBS2"/>
    <property type="match status" value="1"/>
</dbReference>
<dbReference type="SUPFAM" id="SSF50978">
    <property type="entry name" value="WD40 repeat-like"/>
    <property type="match status" value="1"/>
</dbReference>
<evidence type="ECO:0000250" key="1"/>
<evidence type="ECO:0000250" key="2">
    <source>
        <dbReference type="UniProtKB" id="Q9BXC9"/>
    </source>
</evidence>
<evidence type="ECO:0000305" key="3"/>
<accession>Q98SP7</accession>
<organism>
    <name type="scientific">Danio rerio</name>
    <name type="common">Zebrafish</name>
    <name type="synonym">Brachydanio rerio</name>
    <dbReference type="NCBI Taxonomy" id="7955"/>
    <lineage>
        <taxon>Eukaryota</taxon>
        <taxon>Metazoa</taxon>
        <taxon>Chordata</taxon>
        <taxon>Craniata</taxon>
        <taxon>Vertebrata</taxon>
        <taxon>Euteleostomi</taxon>
        <taxon>Actinopterygii</taxon>
        <taxon>Neopterygii</taxon>
        <taxon>Teleostei</taxon>
        <taxon>Ostariophysi</taxon>
        <taxon>Cypriniformes</taxon>
        <taxon>Danionidae</taxon>
        <taxon>Danioninae</taxon>
        <taxon>Danio</taxon>
    </lineage>
</organism>
<proteinExistence type="evidence at transcript level"/>
<keyword id="KW-1003">Cell membrane</keyword>
<keyword id="KW-0966">Cell projection</keyword>
<keyword id="KW-0969">Cilium</keyword>
<keyword id="KW-0963">Cytoplasm</keyword>
<keyword id="KW-0206">Cytoskeleton</keyword>
<keyword id="KW-0472">Membrane</keyword>
<keyword id="KW-1185">Reference proteome</keyword>
<gene>
    <name type="primary">bbs2</name>
</gene>
<protein>
    <recommendedName>
        <fullName evidence="3">BBSome complex member BBS2</fullName>
    </recommendedName>
    <alternativeName>
        <fullName>Bardet-Biedl syndrome 2 protein homolog</fullName>
    </alternativeName>
</protein>
<name>BBS2_DANRE</name>
<feature type="chain" id="PRO_0000064842" description="BBSome complex member BBS2">
    <location>
        <begin position="1"/>
        <end position="715"/>
    </location>
</feature>
<comment type="function">
    <text evidence="2">The BBSome complex is thought to function as a coat complex required for sorting of specific membrane proteins to the primary cilia.</text>
</comment>
<comment type="subunit">
    <text evidence="2">Part of BBSome complex.</text>
</comment>
<comment type="subcellular location">
    <subcellularLocation>
        <location evidence="1">Cell projection</location>
        <location evidence="1">Cilium membrane</location>
    </subcellularLocation>
    <subcellularLocation>
        <location evidence="1">Cytoplasm</location>
    </subcellularLocation>
    <subcellularLocation>
        <location evidence="1">Cytoplasm</location>
        <location evidence="1">Cytoskeleton</location>
        <location evidence="1">Microtubule organizing center</location>
        <location evidence="1">Centrosome</location>
        <location evidence="1">Centriolar satellite</location>
    </subcellularLocation>
</comment>
<reference key="1">
    <citation type="journal article" date="2001" name="Hum. Mol. Genet.">
        <title>Positional cloning of a novel gene on chromosome 16q causing Bardet-Biedl syndrome (BBS2).</title>
        <authorList>
            <person name="Nishimura D.Y."/>
            <person name="Searby C.C."/>
            <person name="Carmi R."/>
            <person name="Elbedour K."/>
            <person name="Van Maldergem L."/>
            <person name="Fulton A.B."/>
            <person name="Lam B.L."/>
            <person name="Powell B.R."/>
            <person name="Swiderski R.E."/>
            <person name="Bugge K.E."/>
            <person name="Haider N.B."/>
            <person name="Kwitek-Black A.E."/>
            <person name="Ying L."/>
            <person name="Duhl D.M."/>
            <person name="Gorman S.M."/>
            <person name="Heon E."/>
            <person name="Iannaccone A."/>
            <person name="Bonneau D."/>
            <person name="Biesecker L.G."/>
            <person name="Jacobson S.G."/>
            <person name="Stone E.M."/>
            <person name="Sheffield V.C."/>
        </authorList>
    </citation>
    <scope>NUCLEOTIDE SEQUENCE [MRNA]</scope>
</reference>